<organism>
    <name type="scientific">African swine fever virus (isolate Tick/South Africa/Pretoriuskop Pr4/1996)</name>
    <name type="common">ASFV</name>
    <dbReference type="NCBI Taxonomy" id="561443"/>
    <lineage>
        <taxon>Viruses</taxon>
        <taxon>Varidnaviria</taxon>
        <taxon>Bamfordvirae</taxon>
        <taxon>Nucleocytoviricota</taxon>
        <taxon>Pokkesviricetes</taxon>
        <taxon>Asfuvirales</taxon>
        <taxon>Asfarviridae</taxon>
        <taxon>Asfivirus</taxon>
        <taxon>African swine fever virus</taxon>
    </lineage>
</organism>
<gene>
    <name type="ordered locus">Pret-110</name>
</gene>
<name>P12_ASFP4</name>
<accession>P0C9Y3</accession>
<sequence length="61" mass="6679">MALDGSSGGGSNVETLLIVAIIVVIMAIMLYYFWWMPRQQKKCSKAEECTCNNGSCSLKTS</sequence>
<protein>
    <recommendedName>
        <fullName>Inner membrane protein p12</fullName>
    </recommendedName>
    <alternativeName>
        <fullName>Protein p12</fullName>
    </alternativeName>
</protein>
<evidence type="ECO:0000250" key="1">
    <source>
        <dbReference type="UniProtKB" id="P32510"/>
    </source>
</evidence>
<evidence type="ECO:0000255" key="2"/>
<evidence type="ECO:0000305" key="3"/>
<organismHost>
    <name type="scientific">Ornithodoros</name>
    <name type="common">relapsing fever ticks</name>
    <dbReference type="NCBI Taxonomy" id="6937"/>
</organismHost>
<organismHost>
    <name type="scientific">Phacochoerus aethiopicus</name>
    <name type="common">Warthog</name>
    <dbReference type="NCBI Taxonomy" id="85517"/>
</organismHost>
<organismHost>
    <name type="scientific">Phacochoerus africanus</name>
    <name type="common">Warthog</name>
    <dbReference type="NCBI Taxonomy" id="41426"/>
</organismHost>
<organismHost>
    <name type="scientific">Potamochoerus larvatus</name>
    <name type="common">Bushpig</name>
    <dbReference type="NCBI Taxonomy" id="273792"/>
</organismHost>
<organismHost>
    <name type="scientific">Sus scrofa</name>
    <name type="common">Pig</name>
    <dbReference type="NCBI Taxonomy" id="9823"/>
</organismHost>
<proteinExistence type="inferred from homology"/>
<dbReference type="EMBL" id="AY261363">
    <property type="status" value="NOT_ANNOTATED_CDS"/>
    <property type="molecule type" value="Genomic_DNA"/>
</dbReference>
<dbReference type="SMR" id="P0C9Y3"/>
<dbReference type="Proteomes" id="UP000000859">
    <property type="component" value="Segment"/>
</dbReference>
<dbReference type="GO" id="GO:0016020">
    <property type="term" value="C:membrane"/>
    <property type="evidence" value="ECO:0007669"/>
    <property type="project" value="UniProtKB-KW"/>
</dbReference>
<dbReference type="GO" id="GO:0055036">
    <property type="term" value="C:virion membrane"/>
    <property type="evidence" value="ECO:0007669"/>
    <property type="project" value="UniProtKB-SubCell"/>
</dbReference>
<feature type="chain" id="PRO_0000373394" description="Inner membrane protein p12">
    <location>
        <begin position="1"/>
        <end position="61"/>
    </location>
</feature>
<feature type="transmembrane region" description="Helical" evidence="2">
    <location>
        <begin position="16"/>
        <end position="36"/>
    </location>
</feature>
<keyword id="KW-1015">Disulfide bond</keyword>
<keyword id="KW-0472">Membrane</keyword>
<keyword id="KW-0812">Transmembrane</keyword>
<keyword id="KW-1133">Transmembrane helix</keyword>
<keyword id="KW-0946">Virion</keyword>
<comment type="subunit">
    <text evidence="1">Homomultimer; disulfide-linked.</text>
</comment>
<comment type="subcellular location">
    <subcellularLocation>
        <location evidence="1">Virion membrane</location>
    </subcellularLocation>
    <text evidence="1">Part of the virion inner membrane.</text>
</comment>
<comment type="induction">
    <text evidence="1">Expressed in the late phase of the viral replicative cycle.</text>
</comment>
<comment type="PTM">
    <text evidence="1">Not glycosylated.</text>
</comment>
<comment type="similarity">
    <text evidence="3">Belongs to the asfivirus inner membrane protein p12 family.</text>
</comment>
<reference key="1">
    <citation type="submission" date="2003-03" db="EMBL/GenBank/DDBJ databases">
        <title>African swine fever virus genomes.</title>
        <authorList>
            <person name="Kutish G.F."/>
            <person name="Rock D.L."/>
        </authorList>
    </citation>
    <scope>NUCLEOTIDE SEQUENCE [GENOMIC DNA]</scope>
</reference>